<comment type="catalytic activity">
    <reaction evidence="1">
        <text>N(2)-acetyl-L-ornithine + 2-oxoglutarate = N-acetyl-L-glutamate 5-semialdehyde + L-glutamate</text>
        <dbReference type="Rhea" id="RHEA:18049"/>
        <dbReference type="ChEBI" id="CHEBI:16810"/>
        <dbReference type="ChEBI" id="CHEBI:29123"/>
        <dbReference type="ChEBI" id="CHEBI:29985"/>
        <dbReference type="ChEBI" id="CHEBI:57805"/>
        <dbReference type="EC" id="2.6.1.11"/>
    </reaction>
</comment>
<comment type="cofactor">
    <cofactor evidence="1">
        <name>pyridoxal 5'-phosphate</name>
        <dbReference type="ChEBI" id="CHEBI:597326"/>
    </cofactor>
    <text evidence="1">Binds 1 pyridoxal phosphate per subunit.</text>
</comment>
<comment type="pathway">
    <text evidence="1">Amino-acid biosynthesis; L-arginine biosynthesis; N(2)-acetyl-L-ornithine from L-glutamate: step 4/4.</text>
</comment>
<comment type="subunit">
    <text evidence="1">Homodimer.</text>
</comment>
<comment type="subcellular location">
    <subcellularLocation>
        <location evidence="1">Cytoplasm</location>
    </subcellularLocation>
</comment>
<comment type="miscellaneous">
    <text evidence="1">May also have succinyldiaminopimelate aminotransferase activity, thus carrying out the corresponding step in lysine biosynthesis.</text>
</comment>
<comment type="similarity">
    <text evidence="1">Belongs to the class-III pyridoxal-phosphate-dependent aminotransferase family. ArgD subfamily.</text>
</comment>
<feature type="chain" id="PRO_0000396816" description="Acetylornithine aminotransferase">
    <location>
        <begin position="1"/>
        <end position="390"/>
    </location>
</feature>
<feature type="binding site" evidence="1">
    <location>
        <begin position="103"/>
        <end position="104"/>
    </location>
    <ligand>
        <name>pyridoxal 5'-phosphate</name>
        <dbReference type="ChEBI" id="CHEBI:597326"/>
    </ligand>
</feature>
<feature type="binding site" evidence="1">
    <location>
        <position position="129"/>
    </location>
    <ligand>
        <name>pyridoxal 5'-phosphate</name>
        <dbReference type="ChEBI" id="CHEBI:597326"/>
    </ligand>
</feature>
<feature type="binding site" evidence="1">
    <location>
        <position position="132"/>
    </location>
    <ligand>
        <name>N(2)-acetyl-L-ornithine</name>
        <dbReference type="ChEBI" id="CHEBI:57805"/>
    </ligand>
</feature>
<feature type="binding site" evidence="1">
    <location>
        <begin position="214"/>
        <end position="217"/>
    </location>
    <ligand>
        <name>pyridoxal 5'-phosphate</name>
        <dbReference type="ChEBI" id="CHEBI:597326"/>
    </ligand>
</feature>
<feature type="binding site" evidence="1">
    <location>
        <position position="271"/>
    </location>
    <ligand>
        <name>N(2)-acetyl-L-ornithine</name>
        <dbReference type="ChEBI" id="CHEBI:57805"/>
    </ligand>
</feature>
<feature type="binding site" evidence="1">
    <location>
        <position position="272"/>
    </location>
    <ligand>
        <name>pyridoxal 5'-phosphate</name>
        <dbReference type="ChEBI" id="CHEBI:597326"/>
    </ligand>
</feature>
<feature type="modified residue" description="N6-(pyridoxal phosphate)lysine" evidence="1">
    <location>
        <position position="243"/>
    </location>
</feature>
<feature type="cross-link" description="Isoglutamyl lysine isopeptide (Lys-Gln) (interchain with Q-Cter in protein Pup)" evidence="2">
    <location>
        <position position="304"/>
    </location>
</feature>
<gene>
    <name evidence="1" type="primary">argD</name>
    <name type="ordered locus">MSMEG_3773</name>
    <name type="ordered locus">MSMEI_3684</name>
</gene>
<evidence type="ECO:0000255" key="1">
    <source>
        <dbReference type="HAMAP-Rule" id="MF_01107"/>
    </source>
</evidence>
<evidence type="ECO:0000269" key="2">
    <source>
    </source>
</evidence>
<name>ARGD_MYCS2</name>
<accession>A0QYS9</accession>
<accession>I7FN58</accession>
<reference key="1">
    <citation type="submission" date="2006-10" db="EMBL/GenBank/DDBJ databases">
        <authorList>
            <person name="Fleischmann R.D."/>
            <person name="Dodson R.J."/>
            <person name="Haft D.H."/>
            <person name="Merkel J.S."/>
            <person name="Nelson W.C."/>
            <person name="Fraser C.M."/>
        </authorList>
    </citation>
    <scope>NUCLEOTIDE SEQUENCE [LARGE SCALE GENOMIC DNA]</scope>
    <source>
        <strain>ATCC 700084 / mc(2)155</strain>
    </source>
</reference>
<reference key="2">
    <citation type="journal article" date="2007" name="Genome Biol.">
        <title>Interrupted coding sequences in Mycobacterium smegmatis: authentic mutations or sequencing errors?</title>
        <authorList>
            <person name="Deshayes C."/>
            <person name="Perrodou E."/>
            <person name="Gallien S."/>
            <person name="Euphrasie D."/>
            <person name="Schaeffer C."/>
            <person name="Van-Dorsselaer A."/>
            <person name="Poch O."/>
            <person name="Lecompte O."/>
            <person name="Reyrat J.-M."/>
        </authorList>
    </citation>
    <scope>NUCLEOTIDE SEQUENCE [LARGE SCALE GENOMIC DNA]</scope>
    <source>
        <strain>ATCC 700084 / mc(2)155</strain>
    </source>
</reference>
<reference key="3">
    <citation type="journal article" date="2009" name="Genome Res.">
        <title>Ortho-proteogenomics: multiple proteomes investigation through orthology and a new MS-based protocol.</title>
        <authorList>
            <person name="Gallien S."/>
            <person name="Perrodou E."/>
            <person name="Carapito C."/>
            <person name="Deshayes C."/>
            <person name="Reyrat J.-M."/>
            <person name="Van Dorsselaer A."/>
            <person name="Poch O."/>
            <person name="Schaeffer C."/>
            <person name="Lecompte O."/>
        </authorList>
    </citation>
    <scope>NUCLEOTIDE SEQUENCE [LARGE SCALE GENOMIC DNA]</scope>
    <source>
        <strain>ATCC 700084 / mc(2)155</strain>
    </source>
</reference>
<reference key="4">
    <citation type="journal article" date="2010" name="Mol. Biosyst.">
        <title>Expansion of the mycobacterial 'PUPylome'.</title>
        <authorList>
            <person name="Watrous J."/>
            <person name="Burns K."/>
            <person name="Liu W.T."/>
            <person name="Patel A."/>
            <person name="Hook V."/>
            <person name="Bafna V."/>
            <person name="Barry C.E. III"/>
            <person name="Bark S."/>
            <person name="Dorrestein P.C."/>
        </authorList>
    </citation>
    <scope>PUPYLATION AT LYS-304</scope>
    <scope>IDENTIFICATION BY MASS SPECTROMETRY</scope>
</reference>
<keyword id="KW-0028">Amino-acid biosynthesis</keyword>
<keyword id="KW-0032">Aminotransferase</keyword>
<keyword id="KW-0055">Arginine biosynthesis</keyword>
<keyword id="KW-0963">Cytoplasm</keyword>
<keyword id="KW-1017">Isopeptide bond</keyword>
<keyword id="KW-0663">Pyridoxal phosphate</keyword>
<keyword id="KW-1185">Reference proteome</keyword>
<keyword id="KW-0808">Transferase</keyword>
<keyword id="KW-0832">Ubl conjugation</keyword>
<protein>
    <recommendedName>
        <fullName evidence="1">Acetylornithine aminotransferase</fullName>
        <shortName evidence="1">ACOAT</shortName>
        <ecNumber evidence="1">2.6.1.11</ecNumber>
    </recommendedName>
</protein>
<dbReference type="EC" id="2.6.1.11" evidence="1"/>
<dbReference type="EMBL" id="CP000480">
    <property type="protein sequence ID" value="ABK75110.1"/>
    <property type="molecule type" value="Genomic_DNA"/>
</dbReference>
<dbReference type="EMBL" id="CP001663">
    <property type="protein sequence ID" value="AFP40143.1"/>
    <property type="molecule type" value="Genomic_DNA"/>
</dbReference>
<dbReference type="RefSeq" id="WP_011729315.1">
    <property type="nucleotide sequence ID" value="NZ_SIJM01000005.1"/>
</dbReference>
<dbReference type="RefSeq" id="YP_888067.1">
    <property type="nucleotide sequence ID" value="NC_008596.1"/>
</dbReference>
<dbReference type="SMR" id="A0QYS9"/>
<dbReference type="STRING" id="246196.MSMEG_3773"/>
<dbReference type="PaxDb" id="246196-MSMEI_3684"/>
<dbReference type="KEGG" id="msb:LJ00_18745"/>
<dbReference type="KEGG" id="msg:MSMEI_3684"/>
<dbReference type="KEGG" id="msm:MSMEG_3773"/>
<dbReference type="PATRIC" id="fig|246196.19.peg.3712"/>
<dbReference type="eggNOG" id="COG4992">
    <property type="taxonomic scope" value="Bacteria"/>
</dbReference>
<dbReference type="OrthoDB" id="9801052at2"/>
<dbReference type="UniPathway" id="UPA00068">
    <property type="reaction ID" value="UER00109"/>
</dbReference>
<dbReference type="Proteomes" id="UP000000757">
    <property type="component" value="Chromosome"/>
</dbReference>
<dbReference type="Proteomes" id="UP000006158">
    <property type="component" value="Chromosome"/>
</dbReference>
<dbReference type="GO" id="GO:0005737">
    <property type="term" value="C:cytoplasm"/>
    <property type="evidence" value="ECO:0007669"/>
    <property type="project" value="UniProtKB-SubCell"/>
</dbReference>
<dbReference type="GO" id="GO:0042802">
    <property type="term" value="F:identical protein binding"/>
    <property type="evidence" value="ECO:0007669"/>
    <property type="project" value="TreeGrafter"/>
</dbReference>
<dbReference type="GO" id="GO:0003992">
    <property type="term" value="F:N2-acetyl-L-ornithine:2-oxoglutarate 5-aminotransferase activity"/>
    <property type="evidence" value="ECO:0007669"/>
    <property type="project" value="UniProtKB-UniRule"/>
</dbReference>
<dbReference type="GO" id="GO:0030170">
    <property type="term" value="F:pyridoxal phosphate binding"/>
    <property type="evidence" value="ECO:0007669"/>
    <property type="project" value="InterPro"/>
</dbReference>
<dbReference type="GO" id="GO:0006526">
    <property type="term" value="P:L-arginine biosynthetic process"/>
    <property type="evidence" value="ECO:0007669"/>
    <property type="project" value="UniProtKB-UniRule"/>
</dbReference>
<dbReference type="CDD" id="cd00610">
    <property type="entry name" value="OAT_like"/>
    <property type="match status" value="1"/>
</dbReference>
<dbReference type="FunFam" id="3.40.640.10:FF:000004">
    <property type="entry name" value="Acetylornithine aminotransferase"/>
    <property type="match status" value="1"/>
</dbReference>
<dbReference type="Gene3D" id="3.90.1150.10">
    <property type="entry name" value="Aspartate Aminotransferase, domain 1"/>
    <property type="match status" value="1"/>
</dbReference>
<dbReference type="Gene3D" id="3.40.640.10">
    <property type="entry name" value="Type I PLP-dependent aspartate aminotransferase-like (Major domain)"/>
    <property type="match status" value="1"/>
</dbReference>
<dbReference type="HAMAP" id="MF_01107">
    <property type="entry name" value="ArgD_aminotrans_3"/>
    <property type="match status" value="1"/>
</dbReference>
<dbReference type="InterPro" id="IPR004636">
    <property type="entry name" value="AcOrn/SuccOrn_fam"/>
</dbReference>
<dbReference type="InterPro" id="IPR005814">
    <property type="entry name" value="Aminotrans_3"/>
</dbReference>
<dbReference type="InterPro" id="IPR049704">
    <property type="entry name" value="Aminotrans_3_PPA_site"/>
</dbReference>
<dbReference type="InterPro" id="IPR050103">
    <property type="entry name" value="Class-III_PLP-dep_AT"/>
</dbReference>
<dbReference type="InterPro" id="IPR015424">
    <property type="entry name" value="PyrdxlP-dep_Trfase"/>
</dbReference>
<dbReference type="InterPro" id="IPR015421">
    <property type="entry name" value="PyrdxlP-dep_Trfase_major"/>
</dbReference>
<dbReference type="InterPro" id="IPR015422">
    <property type="entry name" value="PyrdxlP-dep_Trfase_small"/>
</dbReference>
<dbReference type="NCBIfam" id="TIGR00707">
    <property type="entry name" value="argD"/>
    <property type="match status" value="1"/>
</dbReference>
<dbReference type="NCBIfam" id="NF002325">
    <property type="entry name" value="PRK01278.1"/>
    <property type="match status" value="1"/>
</dbReference>
<dbReference type="NCBIfam" id="NF002874">
    <property type="entry name" value="PRK03244.1"/>
    <property type="match status" value="1"/>
</dbReference>
<dbReference type="PANTHER" id="PTHR11986:SF79">
    <property type="entry name" value="ACETYLORNITHINE AMINOTRANSFERASE, MITOCHONDRIAL"/>
    <property type="match status" value="1"/>
</dbReference>
<dbReference type="PANTHER" id="PTHR11986">
    <property type="entry name" value="AMINOTRANSFERASE CLASS III"/>
    <property type="match status" value="1"/>
</dbReference>
<dbReference type="Pfam" id="PF00202">
    <property type="entry name" value="Aminotran_3"/>
    <property type="match status" value="1"/>
</dbReference>
<dbReference type="PIRSF" id="PIRSF000521">
    <property type="entry name" value="Transaminase_4ab_Lys_Orn"/>
    <property type="match status" value="1"/>
</dbReference>
<dbReference type="SUPFAM" id="SSF53383">
    <property type="entry name" value="PLP-dependent transferases"/>
    <property type="match status" value="1"/>
</dbReference>
<dbReference type="PROSITE" id="PS00600">
    <property type="entry name" value="AA_TRANSFER_CLASS_3"/>
    <property type="match status" value="1"/>
</dbReference>
<proteinExistence type="evidence at protein level"/>
<organism>
    <name type="scientific">Mycolicibacterium smegmatis (strain ATCC 700084 / mc(2)155)</name>
    <name type="common">Mycobacterium smegmatis</name>
    <dbReference type="NCBI Taxonomy" id="246196"/>
    <lineage>
        <taxon>Bacteria</taxon>
        <taxon>Bacillati</taxon>
        <taxon>Actinomycetota</taxon>
        <taxon>Actinomycetes</taxon>
        <taxon>Mycobacteriales</taxon>
        <taxon>Mycobacteriaceae</taxon>
        <taxon>Mycolicibacterium</taxon>
    </lineage>
</organism>
<sequence>MTLQSRWEAVMMNNYGTPPLSLVSGEGAVVTDADGREYLDLLGGIAVNLLGHRHPAVIEAVTTQLDTLGHTSNLYATEPGIALAEALVGQLGTQARVFFCNSGTEANEVAFKITRLTGKTKIVAAEGAFHGRTMGSLALTGQPSKQAPFEPLPGNVMHVPYGDVAALEAAVDDQTAAVFLEPIMGEGGVVVPPAGYLVAAREITSKHGALLVLDEVQTGVGRTGAFFAHQHDGIVPDVVTMAKGLGGGLPIGACLAVGATGDLLTPGLHGSTFGGNPVCTAAGLAVLKTLAAEDLVARAGVLGKTLSHGIEELGHPLVDKVRGKGLLQGIVLTVPSAKAVETAARDAGFLVNAAAPEVVRLAPPLIITEGQIEAFITALPAVLDTAAEDS</sequence>